<evidence type="ECO:0000250" key="1"/>
<evidence type="ECO:0000255" key="2">
    <source>
        <dbReference type="HAMAP-Rule" id="MF_01010"/>
    </source>
</evidence>
<protein>
    <recommendedName>
        <fullName evidence="2">23S rRNA (uracil(1939)-C(5))-methyltransferase RlmD</fullName>
        <ecNumber evidence="2">2.1.1.190</ecNumber>
    </recommendedName>
    <alternativeName>
        <fullName evidence="2">23S rRNA(m5U1939)-methyltransferase</fullName>
    </alternativeName>
</protein>
<organism>
    <name type="scientific">Salmonella typhimurium (strain LT2 / SGSC1412 / ATCC 700720)</name>
    <dbReference type="NCBI Taxonomy" id="99287"/>
    <lineage>
        <taxon>Bacteria</taxon>
        <taxon>Pseudomonadati</taxon>
        <taxon>Pseudomonadota</taxon>
        <taxon>Gammaproteobacteria</taxon>
        <taxon>Enterobacterales</taxon>
        <taxon>Enterobacteriaceae</taxon>
        <taxon>Salmonella</taxon>
    </lineage>
</organism>
<reference key="1">
    <citation type="journal article" date="2001" name="Nature">
        <title>Complete genome sequence of Salmonella enterica serovar Typhimurium LT2.</title>
        <authorList>
            <person name="McClelland M."/>
            <person name="Sanderson K.E."/>
            <person name="Spieth J."/>
            <person name="Clifton S.W."/>
            <person name="Latreille P."/>
            <person name="Courtney L."/>
            <person name="Porwollik S."/>
            <person name="Ali J."/>
            <person name="Dante M."/>
            <person name="Du F."/>
            <person name="Hou S."/>
            <person name="Layman D."/>
            <person name="Leonard S."/>
            <person name="Nguyen C."/>
            <person name="Scott K."/>
            <person name="Holmes A."/>
            <person name="Grewal N."/>
            <person name="Mulvaney E."/>
            <person name="Ryan E."/>
            <person name="Sun H."/>
            <person name="Florea L."/>
            <person name="Miller W."/>
            <person name="Stoneking T."/>
            <person name="Nhan M."/>
            <person name="Waterston R."/>
            <person name="Wilson R.K."/>
        </authorList>
    </citation>
    <scope>NUCLEOTIDE SEQUENCE [LARGE SCALE GENOMIC DNA]</scope>
    <source>
        <strain>LT2 / SGSC1412 / ATCC 700720</strain>
    </source>
</reference>
<dbReference type="EC" id="2.1.1.190" evidence="2"/>
<dbReference type="EMBL" id="AE006468">
    <property type="protein sequence ID" value="AAL21837.1"/>
    <property type="molecule type" value="Genomic_DNA"/>
</dbReference>
<dbReference type="RefSeq" id="WP_000046849.1">
    <property type="nucleotide sequence ID" value="NC_003197.2"/>
</dbReference>
<dbReference type="SMR" id="Q8ZME1"/>
<dbReference type="STRING" id="99287.STM2957"/>
<dbReference type="PaxDb" id="99287-STM2957"/>
<dbReference type="DNASU" id="1254480"/>
<dbReference type="KEGG" id="stm:STM2957"/>
<dbReference type="PATRIC" id="fig|99287.12.peg.3129"/>
<dbReference type="HOGENOM" id="CLU_014689_8_2_6"/>
<dbReference type="OMA" id="GGCKWQH"/>
<dbReference type="PhylomeDB" id="Q8ZME1"/>
<dbReference type="BioCyc" id="SENT99287:STM2957-MONOMER"/>
<dbReference type="Proteomes" id="UP000001014">
    <property type="component" value="Chromosome"/>
</dbReference>
<dbReference type="GO" id="GO:0051539">
    <property type="term" value="F:4 iron, 4 sulfur cluster binding"/>
    <property type="evidence" value="ECO:0007669"/>
    <property type="project" value="UniProtKB-KW"/>
</dbReference>
<dbReference type="GO" id="GO:0005506">
    <property type="term" value="F:iron ion binding"/>
    <property type="evidence" value="ECO:0007669"/>
    <property type="project" value="UniProtKB-UniRule"/>
</dbReference>
<dbReference type="GO" id="GO:0003723">
    <property type="term" value="F:RNA binding"/>
    <property type="evidence" value="ECO:0007669"/>
    <property type="project" value="InterPro"/>
</dbReference>
<dbReference type="GO" id="GO:0070041">
    <property type="term" value="F:rRNA (uridine-C5-)-methyltransferase activity"/>
    <property type="evidence" value="ECO:0000318"/>
    <property type="project" value="GO_Central"/>
</dbReference>
<dbReference type="GO" id="GO:0070475">
    <property type="term" value="P:rRNA base methylation"/>
    <property type="evidence" value="ECO:0000318"/>
    <property type="project" value="GO_Central"/>
</dbReference>
<dbReference type="CDD" id="cd02440">
    <property type="entry name" value="AdoMet_MTases"/>
    <property type="match status" value="1"/>
</dbReference>
<dbReference type="FunFam" id="3.40.50.150:FF:000009">
    <property type="entry name" value="23S rRNA (Uracil(1939)-C(5))-methyltransferase RlmD"/>
    <property type="match status" value="1"/>
</dbReference>
<dbReference type="FunFam" id="2.40.50.1070:FF:000004">
    <property type="entry name" value="23S rRNA (uracil(1939)-C(5))-methyltransferase RlmD"/>
    <property type="match status" value="1"/>
</dbReference>
<dbReference type="FunFam" id="2.40.50.140:FF:000097">
    <property type="entry name" value="23S rRNA (uracil(1939)-C(5))-methyltransferase RlmD"/>
    <property type="match status" value="1"/>
</dbReference>
<dbReference type="Gene3D" id="2.40.50.1070">
    <property type="match status" value="1"/>
</dbReference>
<dbReference type="Gene3D" id="2.40.50.140">
    <property type="entry name" value="Nucleic acid-binding proteins"/>
    <property type="match status" value="1"/>
</dbReference>
<dbReference type="Gene3D" id="3.40.50.150">
    <property type="entry name" value="Vaccinia Virus protein VP39"/>
    <property type="match status" value="1"/>
</dbReference>
<dbReference type="HAMAP" id="MF_01010">
    <property type="entry name" value="23SrRNA_methyltr_RlmD"/>
    <property type="match status" value="1"/>
</dbReference>
<dbReference type="InterPro" id="IPR001566">
    <property type="entry name" value="23S_rRNA_MeTrfase_RlmD"/>
</dbReference>
<dbReference type="InterPro" id="IPR030390">
    <property type="entry name" value="MeTrfase_TrmA_AS"/>
</dbReference>
<dbReference type="InterPro" id="IPR030391">
    <property type="entry name" value="MeTrfase_TrmA_CS"/>
</dbReference>
<dbReference type="InterPro" id="IPR012340">
    <property type="entry name" value="NA-bd_OB-fold"/>
</dbReference>
<dbReference type="InterPro" id="IPR029063">
    <property type="entry name" value="SAM-dependent_MTases_sf"/>
</dbReference>
<dbReference type="InterPro" id="IPR002792">
    <property type="entry name" value="TRAM_dom"/>
</dbReference>
<dbReference type="InterPro" id="IPR010280">
    <property type="entry name" value="U5_MeTrfase_fam"/>
</dbReference>
<dbReference type="NCBIfam" id="NF009639">
    <property type="entry name" value="PRK13168.1"/>
    <property type="match status" value="1"/>
</dbReference>
<dbReference type="NCBIfam" id="TIGR00479">
    <property type="entry name" value="rumA"/>
    <property type="match status" value="1"/>
</dbReference>
<dbReference type="PANTHER" id="PTHR11061:SF49">
    <property type="entry name" value="23S RRNA (URACIL(1939)-C(5))-METHYLTRANSFERASE RLMD"/>
    <property type="match status" value="1"/>
</dbReference>
<dbReference type="PANTHER" id="PTHR11061">
    <property type="entry name" value="RNA M5U METHYLTRANSFERASE"/>
    <property type="match status" value="1"/>
</dbReference>
<dbReference type="Pfam" id="PF01938">
    <property type="entry name" value="TRAM"/>
    <property type="match status" value="1"/>
</dbReference>
<dbReference type="Pfam" id="PF05958">
    <property type="entry name" value="tRNA_U5-meth_tr"/>
    <property type="match status" value="1"/>
</dbReference>
<dbReference type="SUPFAM" id="SSF50249">
    <property type="entry name" value="Nucleic acid-binding proteins"/>
    <property type="match status" value="1"/>
</dbReference>
<dbReference type="SUPFAM" id="SSF53335">
    <property type="entry name" value="S-adenosyl-L-methionine-dependent methyltransferases"/>
    <property type="match status" value="1"/>
</dbReference>
<dbReference type="PROSITE" id="PS51687">
    <property type="entry name" value="SAM_MT_RNA_M5U"/>
    <property type="match status" value="1"/>
</dbReference>
<dbReference type="PROSITE" id="PS50926">
    <property type="entry name" value="TRAM"/>
    <property type="match status" value="1"/>
</dbReference>
<dbReference type="PROSITE" id="PS01230">
    <property type="entry name" value="TRMA_1"/>
    <property type="match status" value="1"/>
</dbReference>
<dbReference type="PROSITE" id="PS01231">
    <property type="entry name" value="TRMA_2"/>
    <property type="match status" value="1"/>
</dbReference>
<accession>Q8ZME1</accession>
<keyword id="KW-0004">4Fe-4S</keyword>
<keyword id="KW-0408">Iron</keyword>
<keyword id="KW-0411">Iron-sulfur</keyword>
<keyword id="KW-0479">Metal-binding</keyword>
<keyword id="KW-0489">Methyltransferase</keyword>
<keyword id="KW-1185">Reference proteome</keyword>
<keyword id="KW-0698">rRNA processing</keyword>
<keyword id="KW-0949">S-adenosyl-L-methionine</keyword>
<keyword id="KW-0808">Transferase</keyword>
<proteinExistence type="inferred from homology"/>
<sequence>MAQFYSAKRRVTTRQIITVKVNDLDSFGQGVARHNGKALFIPGLLPEESAEVIITEDKKQFARARVSRRLNDSPERETPRCPHFGVCGGCQQQHVSIALQQRSKSAALARLMKHEVNDIIAGAPWGYRRRARLSLNCPPDKPLQMGFRKAGSSDIVNVEQCPVLAPQLAALLPRIRACLASLHGTRHLGHVELVQAGSGTLMILRHTAPLSAADKEKLERFSHSEGLSLFLAPFSEILETVSGEAPWYDSHGLRLAFSPRDFIQVNEAVNQQMVARALEWLDVRAEDRVLDLFCGMGNFTLPLATRAASVIGVEGVPALVEKGRENAIRNGLHNVTFFHENLEEDVTKQPWAKNGFDKVLLDPARAGATGVMRHIIKLKPIRIVYVSCNPATLARDSEALVNAGYEVTRLAMLDMFPHTGHLESMVLFERM</sequence>
<gene>
    <name evidence="2" type="primary">rlmD</name>
    <name type="synonym">rumA</name>
    <name type="ordered locus">STM2957</name>
</gene>
<comment type="function">
    <text evidence="2">Catalyzes the formation of 5-methyl-uridine at position 1939 (m5U1939) in 23S rRNA.</text>
</comment>
<comment type="catalytic activity">
    <reaction evidence="2">
        <text>uridine(1939) in 23S rRNA + S-adenosyl-L-methionine = 5-methyluridine(1939) in 23S rRNA + S-adenosyl-L-homocysteine + H(+)</text>
        <dbReference type="Rhea" id="RHEA:42908"/>
        <dbReference type="Rhea" id="RHEA-COMP:10278"/>
        <dbReference type="Rhea" id="RHEA-COMP:10279"/>
        <dbReference type="ChEBI" id="CHEBI:15378"/>
        <dbReference type="ChEBI" id="CHEBI:57856"/>
        <dbReference type="ChEBI" id="CHEBI:59789"/>
        <dbReference type="ChEBI" id="CHEBI:65315"/>
        <dbReference type="ChEBI" id="CHEBI:74447"/>
        <dbReference type="EC" id="2.1.1.190"/>
    </reaction>
</comment>
<comment type="similarity">
    <text evidence="2">Belongs to the class I-like SAM-binding methyltransferase superfamily. RNA M5U methyltransferase family. RlmD subfamily.</text>
</comment>
<feature type="initiator methionine" description="Removed" evidence="1">
    <location>
        <position position="1"/>
    </location>
</feature>
<feature type="chain" id="PRO_0000161913" description="23S rRNA (uracil(1939)-C(5))-methyltransferase RlmD">
    <location>
        <begin position="2"/>
        <end position="431"/>
    </location>
</feature>
<feature type="domain" description="TRAM" evidence="2">
    <location>
        <begin position="10"/>
        <end position="68"/>
    </location>
</feature>
<feature type="active site" description="Nucleophile" evidence="2">
    <location>
        <position position="388"/>
    </location>
</feature>
<feature type="binding site" evidence="2">
    <location>
        <position position="81"/>
    </location>
    <ligand>
        <name>[4Fe-4S] cluster</name>
        <dbReference type="ChEBI" id="CHEBI:49883"/>
    </ligand>
</feature>
<feature type="binding site" evidence="2">
    <location>
        <position position="87"/>
    </location>
    <ligand>
        <name>[4Fe-4S] cluster</name>
        <dbReference type="ChEBI" id="CHEBI:49883"/>
    </ligand>
</feature>
<feature type="binding site" evidence="2">
    <location>
        <position position="90"/>
    </location>
    <ligand>
        <name>[4Fe-4S] cluster</name>
        <dbReference type="ChEBI" id="CHEBI:49883"/>
    </ligand>
</feature>
<feature type="binding site" evidence="2">
    <location>
        <position position="161"/>
    </location>
    <ligand>
        <name>[4Fe-4S] cluster</name>
        <dbReference type="ChEBI" id="CHEBI:49883"/>
    </ligand>
</feature>
<feature type="binding site" evidence="2">
    <location>
        <position position="264"/>
    </location>
    <ligand>
        <name>S-adenosyl-L-methionine</name>
        <dbReference type="ChEBI" id="CHEBI:59789"/>
    </ligand>
</feature>
<feature type="binding site" evidence="2">
    <location>
        <position position="293"/>
    </location>
    <ligand>
        <name>S-adenosyl-L-methionine</name>
        <dbReference type="ChEBI" id="CHEBI:59789"/>
    </ligand>
</feature>
<feature type="binding site" evidence="2">
    <location>
        <position position="298"/>
    </location>
    <ligand>
        <name>S-adenosyl-L-methionine</name>
        <dbReference type="ChEBI" id="CHEBI:59789"/>
    </ligand>
</feature>
<feature type="binding site" evidence="2">
    <location>
        <position position="314"/>
    </location>
    <ligand>
        <name>S-adenosyl-L-methionine</name>
        <dbReference type="ChEBI" id="CHEBI:59789"/>
    </ligand>
</feature>
<feature type="binding site" evidence="2">
    <location>
        <position position="341"/>
    </location>
    <ligand>
        <name>S-adenosyl-L-methionine</name>
        <dbReference type="ChEBI" id="CHEBI:59789"/>
    </ligand>
</feature>
<feature type="binding site" evidence="2">
    <location>
        <position position="362"/>
    </location>
    <ligand>
        <name>S-adenosyl-L-methionine</name>
        <dbReference type="ChEBI" id="CHEBI:59789"/>
    </ligand>
</feature>
<name>RLMD_SALTY</name>